<protein>
    <recommendedName>
        <fullName>Cytochrome c oxidase subunit 13, mitochondrial</fullName>
    </recommendedName>
    <alternativeName>
        <fullName>Cytochrome c oxidase polypeptide VIa</fullName>
    </alternativeName>
</protein>
<evidence type="ECO:0000250" key="1">
    <source>
        <dbReference type="UniProtKB" id="P32799"/>
    </source>
</evidence>
<evidence type="ECO:0000255" key="2"/>
<evidence type="ECO:0000305" key="3"/>
<evidence type="ECO:0007829" key="4">
    <source>
        <dbReference type="PDB" id="8C8Q"/>
    </source>
</evidence>
<organism>
    <name type="scientific">Schizosaccharomyces pombe (strain 972 / ATCC 24843)</name>
    <name type="common">Fission yeast</name>
    <dbReference type="NCBI Taxonomy" id="284812"/>
    <lineage>
        <taxon>Eukaryota</taxon>
        <taxon>Fungi</taxon>
        <taxon>Dikarya</taxon>
        <taxon>Ascomycota</taxon>
        <taxon>Taphrinomycotina</taxon>
        <taxon>Schizosaccharomycetes</taxon>
        <taxon>Schizosaccharomycetales</taxon>
        <taxon>Schizosaccharomycetaceae</taxon>
        <taxon>Schizosaccharomyces</taxon>
    </lineage>
</organism>
<name>COX13_SCHPO</name>
<reference key="1">
    <citation type="journal article" date="2002" name="Nature">
        <title>The genome sequence of Schizosaccharomyces pombe.</title>
        <authorList>
            <person name="Wood V."/>
            <person name="Gwilliam R."/>
            <person name="Rajandream M.A."/>
            <person name="Lyne M.H."/>
            <person name="Lyne R."/>
            <person name="Stewart A."/>
            <person name="Sgouros J.G."/>
            <person name="Peat N."/>
            <person name="Hayles J."/>
            <person name="Baker S.G."/>
            <person name="Basham D."/>
            <person name="Bowman S."/>
            <person name="Brooks K."/>
            <person name="Brown D."/>
            <person name="Brown S."/>
            <person name="Chillingworth T."/>
            <person name="Churcher C.M."/>
            <person name="Collins M."/>
            <person name="Connor R."/>
            <person name="Cronin A."/>
            <person name="Davis P."/>
            <person name="Feltwell T."/>
            <person name="Fraser A."/>
            <person name="Gentles S."/>
            <person name="Goble A."/>
            <person name="Hamlin N."/>
            <person name="Harris D.E."/>
            <person name="Hidalgo J."/>
            <person name="Hodgson G."/>
            <person name="Holroyd S."/>
            <person name="Hornsby T."/>
            <person name="Howarth S."/>
            <person name="Huckle E.J."/>
            <person name="Hunt S."/>
            <person name="Jagels K."/>
            <person name="James K.D."/>
            <person name="Jones L."/>
            <person name="Jones M."/>
            <person name="Leather S."/>
            <person name="McDonald S."/>
            <person name="McLean J."/>
            <person name="Mooney P."/>
            <person name="Moule S."/>
            <person name="Mungall K.L."/>
            <person name="Murphy L.D."/>
            <person name="Niblett D."/>
            <person name="Odell C."/>
            <person name="Oliver K."/>
            <person name="O'Neil S."/>
            <person name="Pearson D."/>
            <person name="Quail M.A."/>
            <person name="Rabbinowitsch E."/>
            <person name="Rutherford K.M."/>
            <person name="Rutter S."/>
            <person name="Saunders D."/>
            <person name="Seeger K."/>
            <person name="Sharp S."/>
            <person name="Skelton J."/>
            <person name="Simmonds M.N."/>
            <person name="Squares R."/>
            <person name="Squares S."/>
            <person name="Stevens K."/>
            <person name="Taylor K."/>
            <person name="Taylor R.G."/>
            <person name="Tivey A."/>
            <person name="Walsh S.V."/>
            <person name="Warren T."/>
            <person name="Whitehead S."/>
            <person name="Woodward J.R."/>
            <person name="Volckaert G."/>
            <person name="Aert R."/>
            <person name="Robben J."/>
            <person name="Grymonprez B."/>
            <person name="Weltjens I."/>
            <person name="Vanstreels E."/>
            <person name="Rieger M."/>
            <person name="Schaefer M."/>
            <person name="Mueller-Auer S."/>
            <person name="Gabel C."/>
            <person name="Fuchs M."/>
            <person name="Duesterhoeft A."/>
            <person name="Fritzc C."/>
            <person name="Holzer E."/>
            <person name="Moestl D."/>
            <person name="Hilbert H."/>
            <person name="Borzym K."/>
            <person name="Langer I."/>
            <person name="Beck A."/>
            <person name="Lehrach H."/>
            <person name="Reinhardt R."/>
            <person name="Pohl T.M."/>
            <person name="Eger P."/>
            <person name="Zimmermann W."/>
            <person name="Wedler H."/>
            <person name="Wambutt R."/>
            <person name="Purnelle B."/>
            <person name="Goffeau A."/>
            <person name="Cadieu E."/>
            <person name="Dreano S."/>
            <person name="Gloux S."/>
            <person name="Lelaure V."/>
            <person name="Mottier S."/>
            <person name="Galibert F."/>
            <person name="Aves S.J."/>
            <person name="Xiang Z."/>
            <person name="Hunt C."/>
            <person name="Moore K."/>
            <person name="Hurst S.M."/>
            <person name="Lucas M."/>
            <person name="Rochet M."/>
            <person name="Gaillardin C."/>
            <person name="Tallada V.A."/>
            <person name="Garzon A."/>
            <person name="Thode G."/>
            <person name="Daga R.R."/>
            <person name="Cruzado L."/>
            <person name="Jimenez J."/>
            <person name="Sanchez M."/>
            <person name="del Rey F."/>
            <person name="Benito J."/>
            <person name="Dominguez A."/>
            <person name="Revuelta J.L."/>
            <person name="Moreno S."/>
            <person name="Armstrong J."/>
            <person name="Forsburg S.L."/>
            <person name="Cerutti L."/>
            <person name="Lowe T."/>
            <person name="McCombie W.R."/>
            <person name="Paulsen I."/>
            <person name="Potashkin J."/>
            <person name="Shpakovski G.V."/>
            <person name="Ussery D."/>
            <person name="Barrell B.G."/>
            <person name="Nurse P."/>
        </authorList>
    </citation>
    <scope>NUCLEOTIDE SEQUENCE [LARGE SCALE GENOMIC DNA]</scope>
    <source>
        <strain>972 / ATCC 24843</strain>
    </source>
</reference>
<comment type="function">
    <text evidence="1">Component of the cytochrome c oxidase, the last enzyme in the mitochondrial electron transport chain which drives oxidative phosphorylation. The respiratory chain contains 3 multisubunit complexes succinate dehydrogenase (complex II, CII), ubiquinol-cytochrome c oxidoreductase (cytochrome b-c1 complex, complex III, CIII) and cytochrome c oxidase (complex IV, CIV), that cooperate to transfer electrons derived from NADH and succinate to molecular oxygen, creating an electrochemical gradient over the inner membrane that drives transmembrane transport and the ATP synthase. Cytochrome c oxidase is the component of the respiratory chain that catalyzes the reduction of oxygen to water. Electrons originating from reduced cytochrome c in the intermembrane space (IMS) are transferred via the dinuclear copper A center (CU(A)) of subunit 2 and heme A of subunit 1 to the active site in subunit 1, a binuclear center (BNC) formed by heme A3 and copper B (CU(B)). The BNC reduces molecular oxygen to 2 water molecules unsing 4 electrons from cytochrome c in the IMS and 4 protons from the mitochondrial matrix.</text>
</comment>
<comment type="pathway">
    <text evidence="1">Energy metabolism; oxidative phosphorylation.</text>
</comment>
<comment type="subunit">
    <text evidence="1">Component of the cytochrome c oxidase (complex IV, CIV), a multisubunit enzyme composed of a catalytic core of 3 subunits and several supernumerary subunits. The complex exists as a monomer or a dimer and forms supercomplexes (SCs) in the inner mitochondrial membrane with ubiquinol-cytochrome c oxidoreductase (cytochrome b-c1 complex, complex III, CIII).</text>
</comment>
<comment type="subcellular location">
    <subcellularLocation>
        <location evidence="1">Mitochondrion inner membrane</location>
        <topology evidence="1">Single-pass membrane protein</topology>
    </subcellularLocation>
</comment>
<comment type="similarity">
    <text evidence="3">Belongs to the cytochrome c oxidase subunit 6A family.</text>
</comment>
<dbReference type="EMBL" id="CU329672">
    <property type="protein sequence ID" value="CAA20783.1"/>
    <property type="molecule type" value="Genomic_DNA"/>
</dbReference>
<dbReference type="PIR" id="T41117">
    <property type="entry name" value="T41117"/>
</dbReference>
<dbReference type="RefSeq" id="NP_588417.1">
    <property type="nucleotide sequence ID" value="NM_001023408.2"/>
</dbReference>
<dbReference type="PDB" id="8C8Q">
    <property type="method" value="EM"/>
    <property type="resolution" value="3.36 A"/>
    <property type="chains" value="K=1-130"/>
</dbReference>
<dbReference type="PDB" id="8Q1B">
    <property type="method" value="EM"/>
    <property type="resolution" value="3.40 A"/>
    <property type="chains" value="k=1-130"/>
</dbReference>
<dbReference type="PDBsum" id="8C8Q"/>
<dbReference type="PDBsum" id="8Q1B"/>
<dbReference type="EMDB" id="EMD-16491"/>
<dbReference type="EMDB" id="EMD-18062"/>
<dbReference type="SMR" id="O74471"/>
<dbReference type="ComplexPortal" id="CPX-9641">
    <property type="entry name" value="Mitochondrial respiratory chain complex IV"/>
</dbReference>
<dbReference type="FunCoup" id="O74471">
    <property type="interactions" value="105"/>
</dbReference>
<dbReference type="STRING" id="284812.O74471"/>
<dbReference type="PaxDb" id="4896-SPCC1739.09c.1"/>
<dbReference type="EnsemblFungi" id="SPCC1739.09c.1">
    <property type="protein sequence ID" value="SPCC1739.09c.1:pep"/>
    <property type="gene ID" value="SPCC1739.09c"/>
</dbReference>
<dbReference type="GeneID" id="2538807"/>
<dbReference type="KEGG" id="spo:2538807"/>
<dbReference type="PomBase" id="SPCC1739.09c">
    <property type="gene designation" value="cox13"/>
</dbReference>
<dbReference type="VEuPathDB" id="FungiDB:SPCC1739.09c"/>
<dbReference type="eggNOG" id="KOG3469">
    <property type="taxonomic scope" value="Eukaryota"/>
</dbReference>
<dbReference type="HOGENOM" id="CLU_122515_0_1_1"/>
<dbReference type="InParanoid" id="O74471"/>
<dbReference type="OMA" id="KLPWMVD"/>
<dbReference type="PhylomeDB" id="O74471"/>
<dbReference type="UniPathway" id="UPA00705"/>
<dbReference type="PRO" id="PR:O74471"/>
<dbReference type="Proteomes" id="UP000002485">
    <property type="component" value="Chromosome III"/>
</dbReference>
<dbReference type="GO" id="GO:0005743">
    <property type="term" value="C:mitochondrial inner membrane"/>
    <property type="evidence" value="ECO:0000305"/>
    <property type="project" value="PomBase"/>
</dbReference>
<dbReference type="GO" id="GO:0005739">
    <property type="term" value="C:mitochondrion"/>
    <property type="evidence" value="ECO:0007005"/>
    <property type="project" value="PomBase"/>
</dbReference>
<dbReference type="GO" id="GO:0045277">
    <property type="term" value="C:respiratory chain complex IV"/>
    <property type="evidence" value="ECO:0000314"/>
    <property type="project" value="PomBase"/>
</dbReference>
<dbReference type="GO" id="GO:0030234">
    <property type="term" value="F:enzyme regulator activity"/>
    <property type="evidence" value="ECO:0000318"/>
    <property type="project" value="GO_Central"/>
</dbReference>
<dbReference type="GO" id="GO:0016491">
    <property type="term" value="F:oxidoreductase activity"/>
    <property type="evidence" value="ECO:0007669"/>
    <property type="project" value="UniProtKB-KW"/>
</dbReference>
<dbReference type="GO" id="GO:0006123">
    <property type="term" value="P:mitochondrial electron transport, cytochrome c to oxygen"/>
    <property type="evidence" value="ECO:0000318"/>
    <property type="project" value="GO_Central"/>
</dbReference>
<dbReference type="GO" id="GO:1902600">
    <property type="term" value="P:proton transmembrane transport"/>
    <property type="evidence" value="ECO:0007669"/>
    <property type="project" value="GOC"/>
</dbReference>
<dbReference type="CDD" id="cd00925">
    <property type="entry name" value="Cyt_c_Oxidase_VIa"/>
    <property type="match status" value="1"/>
</dbReference>
<dbReference type="FunFam" id="4.10.95.10:FF:000001">
    <property type="entry name" value="Cytochrome c oxidase subunit 6A, mitochondrial"/>
    <property type="match status" value="1"/>
</dbReference>
<dbReference type="Gene3D" id="4.10.95.10">
    <property type="entry name" value="Cytochrome c oxidase, subunit VIa"/>
    <property type="match status" value="1"/>
</dbReference>
<dbReference type="InterPro" id="IPR001349">
    <property type="entry name" value="Cyt_c_oxidase_su6a"/>
</dbReference>
<dbReference type="InterPro" id="IPR018507">
    <property type="entry name" value="Cyt_c_oxidase_su6a_CS"/>
</dbReference>
<dbReference type="InterPro" id="IPR036418">
    <property type="entry name" value="Cyt_c_oxidase_su6a_sf"/>
</dbReference>
<dbReference type="PANTHER" id="PTHR11504">
    <property type="entry name" value="CYTOCHROME C OXIDASE POLYPEPTIDE VIA"/>
    <property type="match status" value="1"/>
</dbReference>
<dbReference type="PANTHER" id="PTHR11504:SF0">
    <property type="entry name" value="CYTOCHROME C OXIDASE SUBUNIT"/>
    <property type="match status" value="1"/>
</dbReference>
<dbReference type="Pfam" id="PF02046">
    <property type="entry name" value="COX6A"/>
    <property type="match status" value="1"/>
</dbReference>
<dbReference type="PIRSF" id="PIRSF000277">
    <property type="entry name" value="COX6A1"/>
    <property type="match status" value="1"/>
</dbReference>
<dbReference type="SUPFAM" id="SSF81411">
    <property type="entry name" value="Mitochondrial cytochrome c oxidase subunit VIa"/>
    <property type="match status" value="1"/>
</dbReference>
<dbReference type="PROSITE" id="PS01329">
    <property type="entry name" value="COX6A"/>
    <property type="match status" value="1"/>
</dbReference>
<proteinExistence type="evidence at protein level"/>
<keyword id="KW-0002">3D-structure</keyword>
<keyword id="KW-0472">Membrane</keyword>
<keyword id="KW-0496">Mitochondrion</keyword>
<keyword id="KW-0999">Mitochondrion inner membrane</keyword>
<keyword id="KW-0560">Oxidoreductase</keyword>
<keyword id="KW-1185">Reference proteome</keyword>
<keyword id="KW-0809">Transit peptide</keyword>
<keyword id="KW-0812">Transmembrane</keyword>
<keyword id="KW-1133">Transmembrane helix</keyword>
<gene>
    <name type="primary">cox13</name>
    <name type="ORF">SPCC1739.09c</name>
</gene>
<sequence>MSMMNRNIGFLSRTLKTSVPKRAGLLSFRAYSNEAKVNWLEEVQAEEEHAKRSSEFWKKVTYYIGGPALILASANAYYIYCKHQEHAKHVEDTDPGYSFENLRFKKYPWGDGSKTLFWNDKVNHLKKDDE</sequence>
<accession>O74471</accession>
<feature type="transit peptide" description="Mitochondrion" evidence="2">
    <location>
        <begin position="1"/>
        <end position="31"/>
    </location>
</feature>
<feature type="chain" id="PRO_0000006126" description="Cytochrome c oxidase subunit 13, mitochondrial">
    <location>
        <begin position="32"/>
        <end position="130"/>
    </location>
</feature>
<feature type="topological domain" description="Mitochondrial matrix" evidence="3">
    <location>
        <begin position="32"/>
        <end position="61"/>
    </location>
</feature>
<feature type="transmembrane region" description="Helical" evidence="2">
    <location>
        <begin position="62"/>
        <end position="80"/>
    </location>
</feature>
<feature type="topological domain" description="Mitochondrial intermembrane" evidence="3">
    <location>
        <begin position="81"/>
        <end position="130"/>
    </location>
</feature>
<feature type="helix" evidence="4">
    <location>
        <begin position="39"/>
        <end position="63"/>
    </location>
</feature>
<feature type="helix" evidence="4">
    <location>
        <begin position="65"/>
        <end position="82"/>
    </location>
</feature>
<feature type="turn" evidence="4">
    <location>
        <begin position="83"/>
        <end position="85"/>
    </location>
</feature>
<feature type="strand" evidence="4">
    <location>
        <begin position="92"/>
        <end position="94"/>
    </location>
</feature>
<feature type="turn" evidence="4">
    <location>
        <begin position="97"/>
        <end position="99"/>
    </location>
</feature>
<feature type="strand" evidence="4">
    <location>
        <begin position="108"/>
        <end position="113"/>
    </location>
</feature>
<feature type="turn" evidence="4">
    <location>
        <begin position="120"/>
        <end position="122"/>
    </location>
</feature>